<comment type="function">
    <text evidence="1">Part of a complex that catalyzes the formation of methyl-coenzyme M and tetrahydromethanopterin from coenzyme M and methyl-tetrahydromethanopterin. This is an energy-conserving, sodium-ion translocating step.</text>
</comment>
<comment type="catalytic activity">
    <reaction evidence="1">
        <text>5-methyl-5,6,7,8-tetrahydromethanopterin + coenzyme M + 2 Na(+)(in) = 5,6,7,8-tetrahydromethanopterin + methyl-coenzyme M + 2 Na(+)(out)</text>
        <dbReference type="Rhea" id="RHEA:53492"/>
        <dbReference type="ChEBI" id="CHEBI:29101"/>
        <dbReference type="ChEBI" id="CHEBI:58103"/>
        <dbReference type="ChEBI" id="CHEBI:58116"/>
        <dbReference type="ChEBI" id="CHEBI:58286"/>
        <dbReference type="ChEBI" id="CHEBI:58319"/>
        <dbReference type="EC" id="7.2.1.4"/>
    </reaction>
</comment>
<comment type="pathway">
    <text evidence="1">One-carbon metabolism; methanogenesis from CO(2); methyl-coenzyme M from 5,10-methylene-5,6,7,8-tetrahydromethanopterin: step 2/2.</text>
</comment>
<comment type="subunit">
    <text evidence="1">The complex is composed of 8 subunits; MtrA, MtrB, MtrC, MtrD, MtrE, MtrF, MtrG and MtrH.</text>
</comment>
<comment type="subcellular location">
    <subcellularLocation>
        <location evidence="1">Cell membrane</location>
        <topology evidence="1">Single-pass membrane protein</topology>
    </subcellularLocation>
</comment>
<comment type="similarity">
    <text evidence="1">Belongs to the MtrG family.</text>
</comment>
<sequence length="73" mass="8080">MDGKAPAAYVDPAEFNEVMKRLEKIDEKVEFVNSEVAQRIGKKVGRDIGILYGAVVGLLLFLIYVSVSSMFTI</sequence>
<gene>
    <name evidence="1" type="primary">mtrG</name>
    <name type="ordered locus">MA_0270</name>
</gene>
<dbReference type="EC" id="7.2.1.4" evidence="1"/>
<dbReference type="EMBL" id="AE010299">
    <property type="protein sequence ID" value="AAM03723.1"/>
    <property type="molecule type" value="Genomic_DNA"/>
</dbReference>
<dbReference type="RefSeq" id="WP_011020328.1">
    <property type="nucleotide sequence ID" value="NC_003552.1"/>
</dbReference>
<dbReference type="SMR" id="Q8TU05"/>
<dbReference type="STRING" id="188937.MA_0270"/>
<dbReference type="EnsemblBacteria" id="AAM03723">
    <property type="protein sequence ID" value="AAM03723"/>
    <property type="gene ID" value="MA_0270"/>
</dbReference>
<dbReference type="GeneID" id="1472162"/>
<dbReference type="KEGG" id="mac:MA_0270"/>
<dbReference type="HOGENOM" id="CLU_191926_0_0_2"/>
<dbReference type="InParanoid" id="Q8TU05"/>
<dbReference type="OrthoDB" id="147532at2157"/>
<dbReference type="PhylomeDB" id="Q8TU05"/>
<dbReference type="UniPathway" id="UPA00640">
    <property type="reaction ID" value="UER00698"/>
</dbReference>
<dbReference type="Proteomes" id="UP000002487">
    <property type="component" value="Chromosome"/>
</dbReference>
<dbReference type="GO" id="GO:0005886">
    <property type="term" value="C:plasma membrane"/>
    <property type="evidence" value="ECO:0007669"/>
    <property type="project" value="UniProtKB-SubCell"/>
</dbReference>
<dbReference type="GO" id="GO:0030269">
    <property type="term" value="F:tetrahydromethanopterin S-methyltransferase activity"/>
    <property type="evidence" value="ECO:0007669"/>
    <property type="project" value="UniProtKB-UniRule"/>
</dbReference>
<dbReference type="GO" id="GO:0019386">
    <property type="term" value="P:methanogenesis, from carbon dioxide"/>
    <property type="evidence" value="ECO:0007669"/>
    <property type="project" value="UniProtKB-UniRule"/>
</dbReference>
<dbReference type="GO" id="GO:0032259">
    <property type="term" value="P:methylation"/>
    <property type="evidence" value="ECO:0007669"/>
    <property type="project" value="UniProtKB-KW"/>
</dbReference>
<dbReference type="GO" id="GO:0006730">
    <property type="term" value="P:one-carbon metabolic process"/>
    <property type="evidence" value="ECO:0007669"/>
    <property type="project" value="UniProtKB-UniRule"/>
</dbReference>
<dbReference type="HAMAP" id="MF_01500">
    <property type="entry name" value="MtrG"/>
    <property type="match status" value="1"/>
</dbReference>
<dbReference type="InterPro" id="IPR005866">
    <property type="entry name" value="THM_MeTrfase_su_G"/>
</dbReference>
<dbReference type="NCBIfam" id="TIGR01149">
    <property type="entry name" value="mtrG"/>
    <property type="match status" value="1"/>
</dbReference>
<dbReference type="Pfam" id="PF04210">
    <property type="entry name" value="MtrG"/>
    <property type="match status" value="1"/>
</dbReference>
<dbReference type="PIRSF" id="PIRSF006500">
    <property type="entry name" value="MtrG"/>
    <property type="match status" value="1"/>
</dbReference>
<accession>Q8TU05</accession>
<organism>
    <name type="scientific">Methanosarcina acetivorans (strain ATCC 35395 / DSM 2834 / JCM 12185 / C2A)</name>
    <dbReference type="NCBI Taxonomy" id="188937"/>
    <lineage>
        <taxon>Archaea</taxon>
        <taxon>Methanobacteriati</taxon>
        <taxon>Methanobacteriota</taxon>
        <taxon>Stenosarchaea group</taxon>
        <taxon>Methanomicrobia</taxon>
        <taxon>Methanosarcinales</taxon>
        <taxon>Methanosarcinaceae</taxon>
        <taxon>Methanosarcina</taxon>
    </lineage>
</organism>
<reference key="1">
    <citation type="journal article" date="2002" name="Genome Res.">
        <title>The genome of Methanosarcina acetivorans reveals extensive metabolic and physiological diversity.</title>
        <authorList>
            <person name="Galagan J.E."/>
            <person name="Nusbaum C."/>
            <person name="Roy A."/>
            <person name="Endrizzi M.G."/>
            <person name="Macdonald P."/>
            <person name="FitzHugh W."/>
            <person name="Calvo S."/>
            <person name="Engels R."/>
            <person name="Smirnov S."/>
            <person name="Atnoor D."/>
            <person name="Brown A."/>
            <person name="Allen N."/>
            <person name="Naylor J."/>
            <person name="Stange-Thomann N."/>
            <person name="DeArellano K."/>
            <person name="Johnson R."/>
            <person name="Linton L."/>
            <person name="McEwan P."/>
            <person name="McKernan K."/>
            <person name="Talamas J."/>
            <person name="Tirrell A."/>
            <person name="Ye W."/>
            <person name="Zimmer A."/>
            <person name="Barber R.D."/>
            <person name="Cann I."/>
            <person name="Graham D.E."/>
            <person name="Grahame D.A."/>
            <person name="Guss A.M."/>
            <person name="Hedderich R."/>
            <person name="Ingram-Smith C."/>
            <person name="Kuettner H.C."/>
            <person name="Krzycki J.A."/>
            <person name="Leigh J.A."/>
            <person name="Li W."/>
            <person name="Liu J."/>
            <person name="Mukhopadhyay B."/>
            <person name="Reeve J.N."/>
            <person name="Smith K."/>
            <person name="Springer T.A."/>
            <person name="Umayam L.A."/>
            <person name="White O."/>
            <person name="White R.H."/>
            <person name="de Macario E.C."/>
            <person name="Ferry J.G."/>
            <person name="Jarrell K.F."/>
            <person name="Jing H."/>
            <person name="Macario A.J.L."/>
            <person name="Paulsen I.T."/>
            <person name="Pritchett M."/>
            <person name="Sowers K.R."/>
            <person name="Swanson R.V."/>
            <person name="Zinder S.H."/>
            <person name="Lander E."/>
            <person name="Metcalf W.W."/>
            <person name="Birren B."/>
        </authorList>
    </citation>
    <scope>NUCLEOTIDE SEQUENCE [LARGE SCALE GENOMIC DNA]</scope>
    <source>
        <strain>ATCC 35395 / DSM 2834 / JCM 12185 / C2A</strain>
    </source>
</reference>
<evidence type="ECO:0000255" key="1">
    <source>
        <dbReference type="HAMAP-Rule" id="MF_01500"/>
    </source>
</evidence>
<proteinExistence type="inferred from homology"/>
<keyword id="KW-1003">Cell membrane</keyword>
<keyword id="KW-0472">Membrane</keyword>
<keyword id="KW-0484">Methanogenesis</keyword>
<keyword id="KW-0489">Methyltransferase</keyword>
<keyword id="KW-0554">One-carbon metabolism</keyword>
<keyword id="KW-1185">Reference proteome</keyword>
<keyword id="KW-0808">Transferase</keyword>
<keyword id="KW-1278">Translocase</keyword>
<keyword id="KW-0812">Transmembrane</keyword>
<keyword id="KW-1133">Transmembrane helix</keyword>
<feature type="chain" id="PRO_0000147553" description="Tetrahydromethanopterin S-methyltransferase subunit G">
    <location>
        <begin position="1"/>
        <end position="73"/>
    </location>
</feature>
<feature type="transmembrane region" description="Helical" evidence="1">
    <location>
        <begin position="48"/>
        <end position="68"/>
    </location>
</feature>
<protein>
    <recommendedName>
        <fullName evidence="1">Tetrahydromethanopterin S-methyltransferase subunit G</fullName>
        <ecNumber evidence="1">7.2.1.4</ecNumber>
    </recommendedName>
    <alternativeName>
        <fullName evidence="1">N5-methyltetrahydromethanopterin--coenzyme M methyltransferase subunit G</fullName>
    </alternativeName>
</protein>
<name>MTRG_METAC</name>